<name>DNAA_LIMF3</name>
<gene>
    <name evidence="1" type="primary">dnaA</name>
    <name type="ordered locus">LAF_0001</name>
</gene>
<protein>
    <recommendedName>
        <fullName evidence="1">Chromosomal replication initiator protein DnaA</fullName>
    </recommendedName>
</protein>
<accession>B2GEU8</accession>
<feature type="chain" id="PRO_1000121991" description="Chromosomal replication initiator protein DnaA">
    <location>
        <begin position="1"/>
        <end position="438"/>
    </location>
</feature>
<feature type="region of interest" description="Domain I, interacts with DnaA modulators" evidence="1">
    <location>
        <begin position="1"/>
        <end position="71"/>
    </location>
</feature>
<feature type="region of interest" description="Domain II" evidence="1">
    <location>
        <begin position="71"/>
        <end position="101"/>
    </location>
</feature>
<feature type="region of interest" description="Disordered" evidence="2">
    <location>
        <begin position="81"/>
        <end position="100"/>
    </location>
</feature>
<feature type="region of interest" description="Domain III, AAA+ region" evidence="1">
    <location>
        <begin position="102"/>
        <end position="318"/>
    </location>
</feature>
<feature type="region of interest" description="Domain IV, binds dsDNA" evidence="1">
    <location>
        <begin position="319"/>
        <end position="438"/>
    </location>
</feature>
<feature type="binding site" evidence="1">
    <location>
        <position position="146"/>
    </location>
    <ligand>
        <name>ATP</name>
        <dbReference type="ChEBI" id="CHEBI:30616"/>
    </ligand>
</feature>
<feature type="binding site" evidence="1">
    <location>
        <position position="148"/>
    </location>
    <ligand>
        <name>ATP</name>
        <dbReference type="ChEBI" id="CHEBI:30616"/>
    </ligand>
</feature>
<feature type="binding site" evidence="1">
    <location>
        <position position="149"/>
    </location>
    <ligand>
        <name>ATP</name>
        <dbReference type="ChEBI" id="CHEBI:30616"/>
    </ligand>
</feature>
<feature type="binding site" evidence="1">
    <location>
        <position position="150"/>
    </location>
    <ligand>
        <name>ATP</name>
        <dbReference type="ChEBI" id="CHEBI:30616"/>
    </ligand>
</feature>
<keyword id="KW-0067">ATP-binding</keyword>
<keyword id="KW-0963">Cytoplasm</keyword>
<keyword id="KW-0235">DNA replication</keyword>
<keyword id="KW-0238">DNA-binding</keyword>
<keyword id="KW-0446">Lipid-binding</keyword>
<keyword id="KW-0547">Nucleotide-binding</keyword>
<keyword id="KW-1185">Reference proteome</keyword>
<dbReference type="EMBL" id="AP008937">
    <property type="protein sequence ID" value="BAG26337.1"/>
    <property type="molecule type" value="Genomic_DNA"/>
</dbReference>
<dbReference type="RefSeq" id="WP_012390649.1">
    <property type="nucleotide sequence ID" value="NC_010610.1"/>
</dbReference>
<dbReference type="SMR" id="B2GEU8"/>
<dbReference type="KEGG" id="lfe:LAF_0001"/>
<dbReference type="eggNOG" id="COG0593">
    <property type="taxonomic scope" value="Bacteria"/>
</dbReference>
<dbReference type="HOGENOM" id="CLU_026910_3_1_9"/>
<dbReference type="Proteomes" id="UP000001697">
    <property type="component" value="Chromosome"/>
</dbReference>
<dbReference type="GO" id="GO:0005737">
    <property type="term" value="C:cytoplasm"/>
    <property type="evidence" value="ECO:0007669"/>
    <property type="project" value="UniProtKB-SubCell"/>
</dbReference>
<dbReference type="GO" id="GO:0005886">
    <property type="term" value="C:plasma membrane"/>
    <property type="evidence" value="ECO:0007669"/>
    <property type="project" value="TreeGrafter"/>
</dbReference>
<dbReference type="GO" id="GO:0005524">
    <property type="term" value="F:ATP binding"/>
    <property type="evidence" value="ECO:0007669"/>
    <property type="project" value="UniProtKB-UniRule"/>
</dbReference>
<dbReference type="GO" id="GO:0016887">
    <property type="term" value="F:ATP hydrolysis activity"/>
    <property type="evidence" value="ECO:0007669"/>
    <property type="project" value="InterPro"/>
</dbReference>
<dbReference type="GO" id="GO:0003688">
    <property type="term" value="F:DNA replication origin binding"/>
    <property type="evidence" value="ECO:0007669"/>
    <property type="project" value="UniProtKB-UniRule"/>
</dbReference>
<dbReference type="GO" id="GO:0008289">
    <property type="term" value="F:lipid binding"/>
    <property type="evidence" value="ECO:0007669"/>
    <property type="project" value="UniProtKB-KW"/>
</dbReference>
<dbReference type="GO" id="GO:0006270">
    <property type="term" value="P:DNA replication initiation"/>
    <property type="evidence" value="ECO:0007669"/>
    <property type="project" value="UniProtKB-UniRule"/>
</dbReference>
<dbReference type="GO" id="GO:0006275">
    <property type="term" value="P:regulation of DNA replication"/>
    <property type="evidence" value="ECO:0007669"/>
    <property type="project" value="UniProtKB-UniRule"/>
</dbReference>
<dbReference type="CDD" id="cd00009">
    <property type="entry name" value="AAA"/>
    <property type="match status" value="1"/>
</dbReference>
<dbReference type="CDD" id="cd06571">
    <property type="entry name" value="Bac_DnaA_C"/>
    <property type="match status" value="1"/>
</dbReference>
<dbReference type="FunFam" id="1.10.1750.10:FF:000002">
    <property type="entry name" value="Chromosomal replication initiator protein DnaA"/>
    <property type="match status" value="1"/>
</dbReference>
<dbReference type="FunFam" id="1.10.8.60:FF:000003">
    <property type="entry name" value="Chromosomal replication initiator protein DnaA"/>
    <property type="match status" value="1"/>
</dbReference>
<dbReference type="FunFam" id="3.40.50.300:FF:000668">
    <property type="entry name" value="Chromosomal replication initiator protein DnaA"/>
    <property type="match status" value="1"/>
</dbReference>
<dbReference type="Gene3D" id="1.10.1750.10">
    <property type="match status" value="1"/>
</dbReference>
<dbReference type="Gene3D" id="1.10.8.60">
    <property type="match status" value="1"/>
</dbReference>
<dbReference type="Gene3D" id="3.30.300.180">
    <property type="match status" value="1"/>
</dbReference>
<dbReference type="Gene3D" id="3.40.50.300">
    <property type="entry name" value="P-loop containing nucleotide triphosphate hydrolases"/>
    <property type="match status" value="1"/>
</dbReference>
<dbReference type="HAMAP" id="MF_00377">
    <property type="entry name" value="DnaA_bact"/>
    <property type="match status" value="1"/>
</dbReference>
<dbReference type="InterPro" id="IPR003593">
    <property type="entry name" value="AAA+_ATPase"/>
</dbReference>
<dbReference type="InterPro" id="IPR001957">
    <property type="entry name" value="Chromosome_initiator_DnaA"/>
</dbReference>
<dbReference type="InterPro" id="IPR020591">
    <property type="entry name" value="Chromosome_initiator_DnaA-like"/>
</dbReference>
<dbReference type="InterPro" id="IPR018312">
    <property type="entry name" value="Chromosome_initiator_DnaA_CS"/>
</dbReference>
<dbReference type="InterPro" id="IPR013159">
    <property type="entry name" value="DnaA_C"/>
</dbReference>
<dbReference type="InterPro" id="IPR013317">
    <property type="entry name" value="DnaA_dom"/>
</dbReference>
<dbReference type="InterPro" id="IPR024633">
    <property type="entry name" value="DnaA_N_dom"/>
</dbReference>
<dbReference type="InterPro" id="IPR038454">
    <property type="entry name" value="DnaA_N_sf"/>
</dbReference>
<dbReference type="InterPro" id="IPR027417">
    <property type="entry name" value="P-loop_NTPase"/>
</dbReference>
<dbReference type="InterPro" id="IPR010921">
    <property type="entry name" value="Trp_repressor/repl_initiator"/>
</dbReference>
<dbReference type="NCBIfam" id="TIGR00362">
    <property type="entry name" value="DnaA"/>
    <property type="match status" value="1"/>
</dbReference>
<dbReference type="PANTHER" id="PTHR30050">
    <property type="entry name" value="CHROMOSOMAL REPLICATION INITIATOR PROTEIN DNAA"/>
    <property type="match status" value="1"/>
</dbReference>
<dbReference type="PANTHER" id="PTHR30050:SF2">
    <property type="entry name" value="CHROMOSOMAL REPLICATION INITIATOR PROTEIN DNAA"/>
    <property type="match status" value="1"/>
</dbReference>
<dbReference type="Pfam" id="PF00308">
    <property type="entry name" value="Bac_DnaA"/>
    <property type="match status" value="1"/>
</dbReference>
<dbReference type="Pfam" id="PF08299">
    <property type="entry name" value="Bac_DnaA_C"/>
    <property type="match status" value="1"/>
</dbReference>
<dbReference type="Pfam" id="PF11638">
    <property type="entry name" value="DnaA_N"/>
    <property type="match status" value="1"/>
</dbReference>
<dbReference type="PRINTS" id="PR00051">
    <property type="entry name" value="DNAA"/>
</dbReference>
<dbReference type="SMART" id="SM00382">
    <property type="entry name" value="AAA"/>
    <property type="match status" value="1"/>
</dbReference>
<dbReference type="SMART" id="SM00760">
    <property type="entry name" value="Bac_DnaA_C"/>
    <property type="match status" value="1"/>
</dbReference>
<dbReference type="SUPFAM" id="SSF52540">
    <property type="entry name" value="P-loop containing nucleoside triphosphate hydrolases"/>
    <property type="match status" value="1"/>
</dbReference>
<dbReference type="SUPFAM" id="SSF48295">
    <property type="entry name" value="TrpR-like"/>
    <property type="match status" value="1"/>
</dbReference>
<dbReference type="PROSITE" id="PS01008">
    <property type="entry name" value="DNAA"/>
    <property type="match status" value="1"/>
</dbReference>
<comment type="function">
    <text evidence="1">Plays an essential role in the initiation and regulation of chromosomal replication. ATP-DnaA binds to the origin of replication (oriC) to initiate formation of the DNA replication initiation complex once per cell cycle. Binds the DnaA box (a 9 base pair repeat at the origin) and separates the double-stranded (ds)DNA. Forms a right-handed helical filament on oriC DNA; dsDNA binds to the exterior of the filament while single-stranded (ss)DNA is stabiized in the filament's interior. The ATP-DnaA-oriC complex binds and stabilizes one strand of the AT-rich DNA unwinding element (DUE), permitting loading of DNA polymerase. After initiation quickly degrades to an ADP-DnaA complex that is not apt for DNA replication. Binds acidic phospholipids.</text>
</comment>
<comment type="subunit">
    <text evidence="1">Oligomerizes as a right-handed, spiral filament on DNA at oriC.</text>
</comment>
<comment type="subcellular location">
    <subcellularLocation>
        <location evidence="1">Cytoplasm</location>
    </subcellularLocation>
</comment>
<comment type="domain">
    <text evidence="1">Domain I is involved in oligomerization and binding regulators, domain II is flexibile and of varying length in different bacteria, domain III forms the AAA+ region, while domain IV binds dsDNA.</text>
</comment>
<comment type="similarity">
    <text evidence="1">Belongs to the DnaA family.</text>
</comment>
<evidence type="ECO:0000255" key="1">
    <source>
        <dbReference type="HAMAP-Rule" id="MF_00377"/>
    </source>
</evidence>
<evidence type="ECO:0000256" key="2">
    <source>
        <dbReference type="SAM" id="MobiDB-lite"/>
    </source>
</evidence>
<organism>
    <name type="scientific">Limosilactobacillus fermentum (strain NBRC 3956 / LMG 18251)</name>
    <name type="common">Lactobacillus fermentum</name>
    <dbReference type="NCBI Taxonomy" id="334390"/>
    <lineage>
        <taxon>Bacteria</taxon>
        <taxon>Bacillati</taxon>
        <taxon>Bacillota</taxon>
        <taxon>Bacilli</taxon>
        <taxon>Lactobacillales</taxon>
        <taxon>Lactobacillaceae</taxon>
        <taxon>Limosilactobacillus</taxon>
    </lineage>
</organism>
<proteinExistence type="inferred from homology"/>
<sequence length="438" mass="50057">MTELDSLWEAIQNSFRKSKGDTTYKNLIAPAKPLDFANGRLRIQLPSQYHRDFWEQLTDQVVEIVYQRTGQEIRPDYVLATDPTPLAQTPPRPQSTFKEETPLNPEYTFQTFIEGRSNMMAYASAFAASESPGDQYNPLLIYGGVGLGKTHLMQAIANNMKFHNPSVRIKYVTSENFMNDFVNSIKSGTQEEFRREYRDLDALLVDDIQFFASKGETQTEFFNTFNVLYDNKKQIVLTSDKDPREIPNLTERLVSRFMWGVPVEITSPALETRIAILKSKAEEEHLDVPNDVLNFVAQRINTNVRELEGALMRIRVFSELHQQPITLKLATEALQGMVANTETTVTIDLIQKRVATYYNINQSDITGKKRTKNIVVPRQIAMYLSRELTDNSLPKIGKEFGGKDHTTVLHAIDKIERQVQEDARLQGDLVKLKNDLQA</sequence>
<reference key="1">
    <citation type="journal article" date="2008" name="DNA Res.">
        <title>Comparative genome analysis of Lactobacillus reuteri and Lactobacillus fermentum reveal a genomic island for reuterin and cobalamin production.</title>
        <authorList>
            <person name="Morita H."/>
            <person name="Toh H."/>
            <person name="Fukuda S."/>
            <person name="Horikawa H."/>
            <person name="Oshima K."/>
            <person name="Suzuki T."/>
            <person name="Murakami M."/>
            <person name="Hisamatsu S."/>
            <person name="Kato Y."/>
            <person name="Takizawa T."/>
            <person name="Fukuoka H."/>
            <person name="Yoshimura T."/>
            <person name="Itoh K."/>
            <person name="O'Sullivan D.J."/>
            <person name="McKay L.L."/>
            <person name="Ohno H."/>
            <person name="Kikuchi J."/>
            <person name="Masaoka T."/>
            <person name="Hattori M."/>
        </authorList>
    </citation>
    <scope>NUCLEOTIDE SEQUENCE [LARGE SCALE GENOMIC DNA]</scope>
    <source>
        <strain>NBRC 3956 / LMG 18251</strain>
    </source>
</reference>